<protein>
    <recommendedName>
        <fullName>uORF2 protein</fullName>
    </recommendedName>
</protein>
<feature type="chain" id="PRO_0000461830" description="uORF2 protein">
    <location>
        <begin position="1"/>
        <end position="76"/>
    </location>
</feature>
<proteinExistence type="predicted"/>
<comment type="function">
    <text evidence="1">Plays a role in viral replication.</text>
</comment>
<comment type="alternative products">
    <event type="alternative initiation"/>
    <isoform>
        <id>P0DXO1-1</id>
        <name evidence="1">uORF2 protein</name>
        <sequence type="displayed"/>
    </isoform>
    <isoform>
        <id>P0DXO3-1</id>
        <name evidence="1">uORF1 protein</name>
        <sequence type="external"/>
    </isoform>
    <isoform>
        <id>A0A142I5B9-1</id>
        <name>Genome polyprotein</name>
        <sequence type="external"/>
    </isoform>
</comment>
<comment type="miscellaneous">
    <text evidence="1">Product of an upstream open reading frame of the genome polyprotein gene.</text>
</comment>
<comment type="miscellaneous">
    <text evidence="1">The initiator methionine is coded by an unusual start codon TTG.</text>
</comment>
<comment type="miscellaneous">
    <text evidence="2">Belongs to the Zika virus American lineage encoding for a two uORF.</text>
</comment>
<keyword id="KW-0024">Alternative initiation</keyword>
<dbReference type="EMBL" id="KU955593">
    <property type="status" value="NOT_ANNOTATED_CDS"/>
    <property type="molecule type" value="Genomic_RNA"/>
</dbReference>
<dbReference type="EMBL" id="JN860885">
    <property type="status" value="NOT_ANNOTATED_CDS"/>
    <property type="molecule type" value="Genomic_RNA"/>
</dbReference>
<dbReference type="Proteomes" id="UP000157401">
    <property type="component" value="Genome"/>
</dbReference>
<organismHost>
    <name type="scientific">Homo sapiens</name>
    <name type="common">Human</name>
    <dbReference type="NCBI Taxonomy" id="9606"/>
</organismHost>
<sequence>MDLETRVSGHEKPKEEIRRIPDCQYAKTRSSPCEPLWGLEEAASRTSAGSWAHQDGLGDSSLFEIHGNQAITGSHQ</sequence>
<name>ORF2_ZIKVK</name>
<accession>P0DXO1</accession>
<organism>
    <name type="scientific">Zika virus (isolate ZIKV/Human/Cambodia/FSS13025/2010)</name>
    <name type="common">ZIKV</name>
    <dbReference type="NCBI Taxonomy" id="2316109"/>
    <lineage>
        <taxon>Viruses</taxon>
        <taxon>Riboviria</taxon>
        <taxon>Orthornavirae</taxon>
        <taxon>Kitrinoviricota</taxon>
        <taxon>Flasuviricetes</taxon>
        <taxon>Amarillovirales</taxon>
        <taxon>Flaviviridae</taxon>
        <taxon>Orthoflavivirus</taxon>
        <taxon>Orthoflavivirus zikaense</taxon>
    </lineage>
</organism>
<evidence type="ECO:0000269" key="1">
    <source>
    </source>
</evidence>
<evidence type="ECO:0000305" key="2"/>
<reference key="1">
    <citation type="journal article" date="2012" name="PLoS Negl. Trop. Dis.">
        <title>Genetic characterization of zika virus strains: geographic expansion of the asian lineage.</title>
        <authorList>
            <person name="Haddow A.D."/>
            <person name="Schuh A.J."/>
            <person name="Yasuda C.Y."/>
            <person name="Kasper M.R."/>
            <person name="Heang V."/>
            <person name="Huy R."/>
            <person name="Guzman H."/>
            <person name="Tesh R.B."/>
            <person name="Weaver S.C."/>
        </authorList>
    </citation>
    <scope>NUCLEOTIDE SEQUENCE [GENOMIC DNA]</scope>
</reference>
<reference key="2">
    <citation type="journal article" date="2016" name="Genome Announc.">
        <title>Complete Genome Sequences of Five Zika Virus Isolates.</title>
        <authorList>
            <person name="Ladner J.T."/>
            <person name="Wiley M.R."/>
            <person name="Prieto K."/>
            <person name="Yasuda C.Y."/>
            <person name="Nagle E."/>
            <person name="Kasper M.R."/>
            <person name="Reyes D."/>
            <person name="Vasilakis N."/>
            <person name="Heang V."/>
            <person name="Weaver S.C."/>
            <person name="Haddow A."/>
            <person name="Tesh R.B."/>
            <person name="Sovann L."/>
            <person name="Palacios G."/>
        </authorList>
    </citation>
    <scope>NUCLEOTIDE SEQUENCE [LARGE SCALE GENOMIC DNA]</scope>
</reference>
<reference key="3">
    <citation type="journal article" date="2024" name="Nat. Commun.">
        <title>Zika viruses encode 5' upstream open reading frames affecting infection of human brain cells.</title>
        <authorList>
            <person name="Lefevre C."/>
            <person name="Cook G.M."/>
            <person name="Dinan A.M."/>
            <person name="Torii S."/>
            <person name="Stewart H."/>
            <person name="Gibbons G."/>
            <person name="Nicholson A.S."/>
            <person name="Echavarria-Consuegra L."/>
            <person name="Meredith L.W."/>
            <person name="Lulla V."/>
            <person name="McGovern N."/>
            <person name="Kenyon J.C."/>
            <person name="Goodfellow I."/>
            <person name="Deane J.E."/>
            <person name="Graham S.C."/>
            <person name="Lakatos A."/>
            <person name="Lambrechts L."/>
            <person name="Brierley I."/>
            <person name="Irigoyen N."/>
        </authorList>
    </citation>
    <scope>ALTERNATIVE INITIATION (ISOFORM UROF1 AND UORF2)</scope>
    <scope>FUNCTION</scope>
    <source>
        <strain>Isolate PE243</strain>
    </source>
</reference>